<organism>
    <name type="scientific">Oenothera biennis</name>
    <name type="common">German evening primrose</name>
    <name type="synonym">Onagra biennis</name>
    <dbReference type="NCBI Taxonomy" id="3942"/>
    <lineage>
        <taxon>Eukaryota</taxon>
        <taxon>Viridiplantae</taxon>
        <taxon>Streptophyta</taxon>
        <taxon>Embryophyta</taxon>
        <taxon>Tracheophyta</taxon>
        <taxon>Spermatophyta</taxon>
        <taxon>Magnoliopsida</taxon>
        <taxon>eudicotyledons</taxon>
        <taxon>Gunneridae</taxon>
        <taxon>Pentapetalae</taxon>
        <taxon>rosids</taxon>
        <taxon>malvids</taxon>
        <taxon>Myrtales</taxon>
        <taxon>Onagraceae</taxon>
        <taxon>Onagroideae</taxon>
        <taxon>Onagreae</taxon>
        <taxon>Oenothera</taxon>
    </lineage>
</organism>
<proteinExistence type="inferred from homology"/>
<feature type="chain" id="PRO_0000364219" description="Small ribosomal subunit protein uS11c">
    <location>
        <begin position="1"/>
        <end position="144"/>
    </location>
</feature>
<keyword id="KW-0150">Chloroplast</keyword>
<keyword id="KW-0934">Plastid</keyword>
<keyword id="KW-0687">Ribonucleoprotein</keyword>
<keyword id="KW-0689">Ribosomal protein</keyword>
<keyword id="KW-0694">RNA-binding</keyword>
<keyword id="KW-0699">rRNA-binding</keyword>
<name>RR11_OENBI</name>
<reference key="1">
    <citation type="journal article" date="2008" name="Nucleic Acids Res.">
        <title>The complete nucleotide sequences of the five genetically distinct plastid genomes of Oenothera, subsection Oenothera: I. Sequence evaluation and plastome evolution.</title>
        <authorList>
            <person name="Greiner S."/>
            <person name="Wang X."/>
            <person name="Rauwolf U."/>
            <person name="Silber M.V."/>
            <person name="Mayer K."/>
            <person name="Meurer J."/>
            <person name="Haberer G."/>
            <person name="Herrmann R.G."/>
        </authorList>
    </citation>
    <scope>NUCLEOTIDE SEQUENCE [LARGE SCALE GENOMIC DNA]</scope>
    <source>
        <strain>cv. Suaveolens Grado</strain>
    </source>
</reference>
<evidence type="ECO:0000255" key="1">
    <source>
        <dbReference type="HAMAP-Rule" id="MF_01310"/>
    </source>
</evidence>
<evidence type="ECO:0000305" key="2"/>
<sequence length="144" mass="15853">MAKSIPSAGLRLRLRLRRNARRRSRKSTRKIPKGVIHVQASFHNTIVTVTDVRGRVISWSSAGTCGFKSTRKGTPFAAQTAAGDAIRPVVDQGMQRAEVRIKGPGLGRDAALRAIRRSGIRLSCIRDVTPLPHNGCRPPKKRRV</sequence>
<dbReference type="EMBL" id="EU262889">
    <property type="protein sequence ID" value="ABW98905.1"/>
    <property type="molecule type" value="Genomic_DNA"/>
</dbReference>
<dbReference type="RefSeq" id="YP_001687400.1">
    <property type="nucleotide sequence ID" value="NC_010361.1"/>
</dbReference>
<dbReference type="SMR" id="B0Z4Z3"/>
<dbReference type="GeneID" id="5952035"/>
<dbReference type="GO" id="GO:0009507">
    <property type="term" value="C:chloroplast"/>
    <property type="evidence" value="ECO:0007669"/>
    <property type="project" value="UniProtKB-SubCell"/>
</dbReference>
<dbReference type="GO" id="GO:1990904">
    <property type="term" value="C:ribonucleoprotein complex"/>
    <property type="evidence" value="ECO:0007669"/>
    <property type="project" value="UniProtKB-KW"/>
</dbReference>
<dbReference type="GO" id="GO:0005840">
    <property type="term" value="C:ribosome"/>
    <property type="evidence" value="ECO:0007669"/>
    <property type="project" value="UniProtKB-KW"/>
</dbReference>
<dbReference type="GO" id="GO:0019843">
    <property type="term" value="F:rRNA binding"/>
    <property type="evidence" value="ECO:0007669"/>
    <property type="project" value="UniProtKB-UniRule"/>
</dbReference>
<dbReference type="GO" id="GO:0003735">
    <property type="term" value="F:structural constituent of ribosome"/>
    <property type="evidence" value="ECO:0007669"/>
    <property type="project" value="InterPro"/>
</dbReference>
<dbReference type="GO" id="GO:0006412">
    <property type="term" value="P:translation"/>
    <property type="evidence" value="ECO:0007669"/>
    <property type="project" value="UniProtKB-UniRule"/>
</dbReference>
<dbReference type="FunFam" id="3.30.420.80:FF:000003">
    <property type="entry name" value="30S ribosomal protein S11, chloroplastic"/>
    <property type="match status" value="1"/>
</dbReference>
<dbReference type="Gene3D" id="3.30.420.80">
    <property type="entry name" value="Ribosomal protein S11"/>
    <property type="match status" value="1"/>
</dbReference>
<dbReference type="HAMAP" id="MF_01310">
    <property type="entry name" value="Ribosomal_uS11"/>
    <property type="match status" value="1"/>
</dbReference>
<dbReference type="InterPro" id="IPR001971">
    <property type="entry name" value="Ribosomal_uS11"/>
</dbReference>
<dbReference type="InterPro" id="IPR019981">
    <property type="entry name" value="Ribosomal_uS11_bac-type"/>
</dbReference>
<dbReference type="InterPro" id="IPR018102">
    <property type="entry name" value="Ribosomal_uS11_CS"/>
</dbReference>
<dbReference type="InterPro" id="IPR036967">
    <property type="entry name" value="Ribosomal_uS11_sf"/>
</dbReference>
<dbReference type="NCBIfam" id="NF003698">
    <property type="entry name" value="PRK05309.1"/>
    <property type="match status" value="1"/>
</dbReference>
<dbReference type="NCBIfam" id="TIGR03632">
    <property type="entry name" value="uS11_bact"/>
    <property type="match status" value="1"/>
</dbReference>
<dbReference type="PANTHER" id="PTHR11759">
    <property type="entry name" value="40S RIBOSOMAL PROTEIN S14/30S RIBOSOMAL PROTEIN S11"/>
    <property type="match status" value="1"/>
</dbReference>
<dbReference type="Pfam" id="PF00411">
    <property type="entry name" value="Ribosomal_S11"/>
    <property type="match status" value="1"/>
</dbReference>
<dbReference type="PIRSF" id="PIRSF002131">
    <property type="entry name" value="Ribosomal_S11"/>
    <property type="match status" value="1"/>
</dbReference>
<dbReference type="SUPFAM" id="SSF53137">
    <property type="entry name" value="Translational machinery components"/>
    <property type="match status" value="1"/>
</dbReference>
<dbReference type="PROSITE" id="PS00054">
    <property type="entry name" value="RIBOSOMAL_S11"/>
    <property type="match status" value="1"/>
</dbReference>
<accession>B0Z4Z3</accession>
<gene>
    <name evidence="1" type="primary">rps11</name>
</gene>
<comment type="subunit">
    <text evidence="1">Part of the 30S ribosomal subunit.</text>
</comment>
<comment type="subcellular location">
    <subcellularLocation>
        <location>Plastid</location>
        <location>Chloroplast</location>
    </subcellularLocation>
</comment>
<comment type="similarity">
    <text evidence="1">Belongs to the universal ribosomal protein uS11 family.</text>
</comment>
<protein>
    <recommendedName>
        <fullName evidence="1">Small ribosomal subunit protein uS11c</fullName>
    </recommendedName>
    <alternativeName>
        <fullName evidence="2">30S ribosomal protein S11, chloroplastic</fullName>
    </alternativeName>
</protein>
<geneLocation type="chloroplast"/>